<dbReference type="EC" id="6.3.4.19" evidence="1"/>
<dbReference type="EMBL" id="AE003849">
    <property type="protein sequence ID" value="AAF83469.1"/>
    <property type="molecule type" value="Genomic_DNA"/>
</dbReference>
<dbReference type="PIR" id="B82778">
    <property type="entry name" value="B82778"/>
</dbReference>
<dbReference type="SMR" id="Q9PFJ8"/>
<dbReference type="STRING" id="160492.XF_0659"/>
<dbReference type="KEGG" id="xfa:XF_0659"/>
<dbReference type="eggNOG" id="COG0037">
    <property type="taxonomic scope" value="Bacteria"/>
</dbReference>
<dbReference type="HOGENOM" id="CLU_018869_2_0_6"/>
<dbReference type="Proteomes" id="UP000000812">
    <property type="component" value="Chromosome"/>
</dbReference>
<dbReference type="GO" id="GO:0005737">
    <property type="term" value="C:cytoplasm"/>
    <property type="evidence" value="ECO:0007669"/>
    <property type="project" value="UniProtKB-SubCell"/>
</dbReference>
<dbReference type="GO" id="GO:0005524">
    <property type="term" value="F:ATP binding"/>
    <property type="evidence" value="ECO:0007669"/>
    <property type="project" value="UniProtKB-UniRule"/>
</dbReference>
<dbReference type="GO" id="GO:0032267">
    <property type="term" value="F:tRNA(Ile)-lysidine synthase activity"/>
    <property type="evidence" value="ECO:0007669"/>
    <property type="project" value="UniProtKB-EC"/>
</dbReference>
<dbReference type="GO" id="GO:0006400">
    <property type="term" value="P:tRNA modification"/>
    <property type="evidence" value="ECO:0007669"/>
    <property type="project" value="UniProtKB-UniRule"/>
</dbReference>
<dbReference type="CDD" id="cd01992">
    <property type="entry name" value="TilS_N"/>
    <property type="match status" value="1"/>
</dbReference>
<dbReference type="Gene3D" id="1.20.59.20">
    <property type="match status" value="1"/>
</dbReference>
<dbReference type="Gene3D" id="3.40.50.620">
    <property type="entry name" value="HUPs"/>
    <property type="match status" value="1"/>
</dbReference>
<dbReference type="HAMAP" id="MF_01161">
    <property type="entry name" value="tRNA_Ile_lys_synt"/>
    <property type="match status" value="1"/>
</dbReference>
<dbReference type="InterPro" id="IPR012796">
    <property type="entry name" value="Lysidine-tRNA-synth_C"/>
</dbReference>
<dbReference type="InterPro" id="IPR014729">
    <property type="entry name" value="Rossmann-like_a/b/a_fold"/>
</dbReference>
<dbReference type="InterPro" id="IPR011063">
    <property type="entry name" value="TilS/TtcA_N"/>
</dbReference>
<dbReference type="InterPro" id="IPR012094">
    <property type="entry name" value="tRNA_Ile_lys_synt"/>
</dbReference>
<dbReference type="InterPro" id="IPR012795">
    <property type="entry name" value="tRNA_Ile_lys_synt_N"/>
</dbReference>
<dbReference type="InterPro" id="IPR015262">
    <property type="entry name" value="tRNA_Ile_lys_synt_subst-bd"/>
</dbReference>
<dbReference type="NCBIfam" id="TIGR02433">
    <property type="entry name" value="lysidine_TilS_C"/>
    <property type="match status" value="1"/>
</dbReference>
<dbReference type="NCBIfam" id="TIGR02432">
    <property type="entry name" value="lysidine_TilS_N"/>
    <property type="match status" value="1"/>
</dbReference>
<dbReference type="PANTHER" id="PTHR43033">
    <property type="entry name" value="TRNA(ILE)-LYSIDINE SYNTHASE-RELATED"/>
    <property type="match status" value="1"/>
</dbReference>
<dbReference type="PANTHER" id="PTHR43033:SF1">
    <property type="entry name" value="TRNA(ILE)-LYSIDINE SYNTHASE-RELATED"/>
    <property type="match status" value="1"/>
</dbReference>
<dbReference type="Pfam" id="PF01171">
    <property type="entry name" value="ATP_bind_3"/>
    <property type="match status" value="1"/>
</dbReference>
<dbReference type="Pfam" id="PF09179">
    <property type="entry name" value="TilS"/>
    <property type="match status" value="1"/>
</dbReference>
<dbReference type="Pfam" id="PF11734">
    <property type="entry name" value="TilS_C"/>
    <property type="match status" value="1"/>
</dbReference>
<dbReference type="SMART" id="SM00977">
    <property type="entry name" value="TilS_C"/>
    <property type="match status" value="1"/>
</dbReference>
<dbReference type="SUPFAM" id="SSF52402">
    <property type="entry name" value="Adenine nucleotide alpha hydrolases-like"/>
    <property type="match status" value="1"/>
</dbReference>
<dbReference type="SUPFAM" id="SSF82829">
    <property type="entry name" value="MesJ substrate recognition domain-like"/>
    <property type="match status" value="1"/>
</dbReference>
<dbReference type="SUPFAM" id="SSF56037">
    <property type="entry name" value="PheT/TilS domain"/>
    <property type="match status" value="1"/>
</dbReference>
<accession>Q9PFJ8</accession>
<protein>
    <recommendedName>
        <fullName evidence="1">tRNA(Ile)-lysidine synthase</fullName>
        <ecNumber evidence="1">6.3.4.19</ecNumber>
    </recommendedName>
    <alternativeName>
        <fullName evidence="1">tRNA(Ile)-2-lysyl-cytidine synthase</fullName>
    </alternativeName>
    <alternativeName>
        <fullName evidence="1">tRNA(Ile)-lysidine synthetase</fullName>
    </alternativeName>
</protein>
<reference key="1">
    <citation type="journal article" date="2000" name="Nature">
        <title>The genome sequence of the plant pathogen Xylella fastidiosa.</title>
        <authorList>
            <person name="Simpson A.J.G."/>
            <person name="Reinach F.C."/>
            <person name="Arruda P."/>
            <person name="Abreu F.A."/>
            <person name="Acencio M."/>
            <person name="Alvarenga R."/>
            <person name="Alves L.M.C."/>
            <person name="Araya J.E."/>
            <person name="Baia G.S."/>
            <person name="Baptista C.S."/>
            <person name="Barros M.H."/>
            <person name="Bonaccorsi E.D."/>
            <person name="Bordin S."/>
            <person name="Bove J.M."/>
            <person name="Briones M.R.S."/>
            <person name="Bueno M.R.P."/>
            <person name="Camargo A.A."/>
            <person name="Camargo L.E.A."/>
            <person name="Carraro D.M."/>
            <person name="Carrer H."/>
            <person name="Colauto N.B."/>
            <person name="Colombo C."/>
            <person name="Costa F.F."/>
            <person name="Costa M.C.R."/>
            <person name="Costa-Neto C.M."/>
            <person name="Coutinho L.L."/>
            <person name="Cristofani M."/>
            <person name="Dias-Neto E."/>
            <person name="Docena C."/>
            <person name="El-Dorry H."/>
            <person name="Facincani A.P."/>
            <person name="Ferreira A.J.S."/>
            <person name="Ferreira V.C.A."/>
            <person name="Ferro J.A."/>
            <person name="Fraga J.S."/>
            <person name="Franca S.C."/>
            <person name="Franco M.C."/>
            <person name="Frohme M."/>
            <person name="Furlan L.R."/>
            <person name="Garnier M."/>
            <person name="Goldman G.H."/>
            <person name="Goldman M.H.S."/>
            <person name="Gomes S.L."/>
            <person name="Gruber A."/>
            <person name="Ho P.L."/>
            <person name="Hoheisel J.D."/>
            <person name="Junqueira M.L."/>
            <person name="Kemper E.L."/>
            <person name="Kitajima J.P."/>
            <person name="Krieger J.E."/>
            <person name="Kuramae E.E."/>
            <person name="Laigret F."/>
            <person name="Lambais M.R."/>
            <person name="Leite L.C.C."/>
            <person name="Lemos E.G.M."/>
            <person name="Lemos M.V.F."/>
            <person name="Lopes S.A."/>
            <person name="Lopes C.R."/>
            <person name="Machado J.A."/>
            <person name="Machado M.A."/>
            <person name="Madeira A.M.B.N."/>
            <person name="Madeira H.M.F."/>
            <person name="Marino C.L."/>
            <person name="Marques M.V."/>
            <person name="Martins E.A.L."/>
            <person name="Martins E.M.F."/>
            <person name="Matsukuma A.Y."/>
            <person name="Menck C.F.M."/>
            <person name="Miracca E.C."/>
            <person name="Miyaki C.Y."/>
            <person name="Monteiro-Vitorello C.B."/>
            <person name="Moon D.H."/>
            <person name="Nagai M.A."/>
            <person name="Nascimento A.L.T.O."/>
            <person name="Netto L.E.S."/>
            <person name="Nhani A. Jr."/>
            <person name="Nobrega F.G."/>
            <person name="Nunes L.R."/>
            <person name="Oliveira M.A."/>
            <person name="de Oliveira M.C."/>
            <person name="de Oliveira R.C."/>
            <person name="Palmieri D.A."/>
            <person name="Paris A."/>
            <person name="Peixoto B.R."/>
            <person name="Pereira G.A.G."/>
            <person name="Pereira H.A. Jr."/>
            <person name="Pesquero J.B."/>
            <person name="Quaggio R.B."/>
            <person name="Roberto P.G."/>
            <person name="Rodrigues V."/>
            <person name="de Rosa A.J.M."/>
            <person name="de Rosa V.E. Jr."/>
            <person name="de Sa R.G."/>
            <person name="Santelli R.V."/>
            <person name="Sawasaki H.E."/>
            <person name="da Silva A.C.R."/>
            <person name="da Silva A.M."/>
            <person name="da Silva F.R."/>
            <person name="Silva W.A. Jr."/>
            <person name="da Silveira J.F."/>
            <person name="Silvestri M.L.Z."/>
            <person name="Siqueira W.J."/>
            <person name="de Souza A.A."/>
            <person name="de Souza A.P."/>
            <person name="Terenzi M.F."/>
            <person name="Truffi D."/>
            <person name="Tsai S.M."/>
            <person name="Tsuhako M.H."/>
            <person name="Vallada H."/>
            <person name="Van Sluys M.A."/>
            <person name="Verjovski-Almeida S."/>
            <person name="Vettore A.L."/>
            <person name="Zago M.A."/>
            <person name="Zatz M."/>
            <person name="Meidanis J."/>
            <person name="Setubal J.C."/>
        </authorList>
    </citation>
    <scope>NUCLEOTIDE SEQUENCE [LARGE SCALE GENOMIC DNA]</scope>
    <source>
        <strain>9a5c</strain>
    </source>
</reference>
<comment type="function">
    <text evidence="1">Ligates lysine onto the cytidine present at position 34 of the AUA codon-specific tRNA(Ile) that contains the anticodon CAU, in an ATP-dependent manner. Cytidine is converted to lysidine, thus changing the amino acid specificity of the tRNA from methionine to isoleucine.</text>
</comment>
<comment type="catalytic activity">
    <reaction evidence="1">
        <text>cytidine(34) in tRNA(Ile2) + L-lysine + ATP = lysidine(34) in tRNA(Ile2) + AMP + diphosphate + H(+)</text>
        <dbReference type="Rhea" id="RHEA:43744"/>
        <dbReference type="Rhea" id="RHEA-COMP:10625"/>
        <dbReference type="Rhea" id="RHEA-COMP:10670"/>
        <dbReference type="ChEBI" id="CHEBI:15378"/>
        <dbReference type="ChEBI" id="CHEBI:30616"/>
        <dbReference type="ChEBI" id="CHEBI:32551"/>
        <dbReference type="ChEBI" id="CHEBI:33019"/>
        <dbReference type="ChEBI" id="CHEBI:82748"/>
        <dbReference type="ChEBI" id="CHEBI:83665"/>
        <dbReference type="ChEBI" id="CHEBI:456215"/>
        <dbReference type="EC" id="6.3.4.19"/>
    </reaction>
</comment>
<comment type="subcellular location">
    <subcellularLocation>
        <location evidence="1">Cytoplasm</location>
    </subcellularLocation>
</comment>
<comment type="domain">
    <text>The N-terminal region contains the highly conserved SGGXDS motif, predicted to be a P-loop motif involved in ATP binding.</text>
</comment>
<comment type="similarity">
    <text evidence="1">Belongs to the tRNA(Ile)-lysidine synthase family.</text>
</comment>
<proteinExistence type="inferred from homology"/>
<name>TILS_XYLFA</name>
<keyword id="KW-0067">ATP-binding</keyword>
<keyword id="KW-0963">Cytoplasm</keyword>
<keyword id="KW-0436">Ligase</keyword>
<keyword id="KW-0547">Nucleotide-binding</keyword>
<keyword id="KW-0819">tRNA processing</keyword>
<evidence type="ECO:0000255" key="1">
    <source>
        <dbReference type="HAMAP-Rule" id="MF_01161"/>
    </source>
</evidence>
<gene>
    <name evidence="1" type="primary">tilS</name>
    <name type="ordered locus">XF_0659</name>
</gene>
<feature type="chain" id="PRO_0000181809" description="tRNA(Ile)-lysidine synthase">
    <location>
        <begin position="1"/>
        <end position="437"/>
    </location>
</feature>
<feature type="binding site" evidence="1">
    <location>
        <begin position="22"/>
        <end position="27"/>
    </location>
    <ligand>
        <name>ATP</name>
        <dbReference type="ChEBI" id="CHEBI:30616"/>
    </ligand>
</feature>
<sequence>MTVSFPFPRIPDPGVPVLVAFSGGLDSTVLLHCLASQPTQRIHGLEAIHIHHGLHEHADAWTAHCAAFCTQHYIRLHIARVHVSHNSGQGLEAAARTARRAAFAHTLQHGHYLALAHHCDDQAETWLLRALRGSCDGLAAMRPLTPFAAGHLWRPLLTHSRAQLLDYAQQQHLDWIEDSSNADLRHDRNFLRIHVLPLLHQRWPQATAVLARNAALAAANADLLNAEDAVLLPDLLDPDGALDINALTAHPPARRARLLRAWCARAGAPPLPERGVNIIERELLPARHDSAACFTWSHTEIRRWRLRLYLHRPQPPWPPDWQPLWSGITPLILPDGGQLHLESTDHDTVPGFPHPLCVRARRGGERLILPGRTHSHPLKHLLQDIGIPPWRRASMPLLCDGEQILAAGDALLAAPLVTWLHAHRLKLRWQSHNNTCI</sequence>
<organism>
    <name type="scientific">Xylella fastidiosa (strain 9a5c)</name>
    <dbReference type="NCBI Taxonomy" id="160492"/>
    <lineage>
        <taxon>Bacteria</taxon>
        <taxon>Pseudomonadati</taxon>
        <taxon>Pseudomonadota</taxon>
        <taxon>Gammaproteobacteria</taxon>
        <taxon>Lysobacterales</taxon>
        <taxon>Lysobacteraceae</taxon>
        <taxon>Xylella</taxon>
    </lineage>
</organism>